<protein>
    <recommendedName>
        <fullName evidence="1">Photosystem I reaction center subunit VIII</fullName>
        <shortName evidence="1">PSI-I</shortName>
    </recommendedName>
</protein>
<keyword id="KW-0150">Chloroplast</keyword>
<keyword id="KW-0472">Membrane</keyword>
<keyword id="KW-0602">Photosynthesis</keyword>
<keyword id="KW-0603">Photosystem I</keyword>
<keyword id="KW-0934">Plastid</keyword>
<keyword id="KW-0793">Thylakoid</keyword>
<keyword id="KW-0812">Transmembrane</keyword>
<keyword id="KW-1133">Transmembrane helix</keyword>
<sequence length="36" mass="3937">MTNLNLPSIFVPLVGLVFPAIAMASLFLHVQKNKIV</sequence>
<reference key="1">
    <citation type="journal article" date="2006" name="Theor. Appl. Genet.">
        <title>Complete chloroplast genome sequences of Solanum bulbocastanum, Solanum lycopersicum and comparative analyses with other Solanaceae genomes.</title>
        <authorList>
            <person name="Daniell H."/>
            <person name="Lee S.-B."/>
            <person name="Grevich J."/>
            <person name="Saski C."/>
            <person name="Quesada-Vargas T."/>
            <person name="Guda C."/>
            <person name="Tomkins J."/>
            <person name="Jansen R.K."/>
        </authorList>
    </citation>
    <scope>NUCLEOTIDE SEQUENCE [LARGE SCALE GENOMIC DNA]</scope>
    <source>
        <strain>cv. PT29</strain>
    </source>
</reference>
<geneLocation type="chloroplast"/>
<evidence type="ECO:0000255" key="1">
    <source>
        <dbReference type="HAMAP-Rule" id="MF_00431"/>
    </source>
</evidence>
<accession>Q2MIH7</accession>
<dbReference type="EMBL" id="DQ347958">
    <property type="protein sequence ID" value="ABC56223.1"/>
    <property type="molecule type" value="Genomic_DNA"/>
</dbReference>
<dbReference type="RefSeq" id="YP_538858.1">
    <property type="nucleotide sequence ID" value="NC_007943.1"/>
</dbReference>
<dbReference type="SMR" id="Q2MIH7"/>
<dbReference type="GeneID" id="3989434"/>
<dbReference type="GO" id="GO:0009535">
    <property type="term" value="C:chloroplast thylakoid membrane"/>
    <property type="evidence" value="ECO:0007669"/>
    <property type="project" value="UniProtKB-SubCell"/>
</dbReference>
<dbReference type="GO" id="GO:0009522">
    <property type="term" value="C:photosystem I"/>
    <property type="evidence" value="ECO:0007669"/>
    <property type="project" value="UniProtKB-KW"/>
</dbReference>
<dbReference type="GO" id="GO:0015979">
    <property type="term" value="P:photosynthesis"/>
    <property type="evidence" value="ECO:0007669"/>
    <property type="project" value="UniProtKB-UniRule"/>
</dbReference>
<dbReference type="HAMAP" id="MF_00431">
    <property type="entry name" value="PSI_PsaI"/>
    <property type="match status" value="1"/>
</dbReference>
<dbReference type="InterPro" id="IPR001302">
    <property type="entry name" value="PSI_PsaI"/>
</dbReference>
<dbReference type="InterPro" id="IPR036357">
    <property type="entry name" value="PSI_PsaI_sf"/>
</dbReference>
<dbReference type="NCBIfam" id="TIGR03052">
    <property type="entry name" value="PS_I_psaI"/>
    <property type="match status" value="1"/>
</dbReference>
<dbReference type="PANTHER" id="PTHR35775">
    <property type="match status" value="1"/>
</dbReference>
<dbReference type="PANTHER" id="PTHR35775:SF2">
    <property type="entry name" value="PHOTOSYSTEM I REACTION CENTER SUBUNIT VIII"/>
    <property type="match status" value="1"/>
</dbReference>
<dbReference type="Pfam" id="PF00796">
    <property type="entry name" value="PSI_8"/>
    <property type="match status" value="1"/>
</dbReference>
<dbReference type="SUPFAM" id="SSF81540">
    <property type="entry name" value="Subunit VIII of photosystem I reaction centre, PsaI"/>
    <property type="match status" value="1"/>
</dbReference>
<name>PSAI_SOLBU</name>
<organism>
    <name type="scientific">Solanum bulbocastanum</name>
    <name type="common">Wild potato</name>
    <dbReference type="NCBI Taxonomy" id="147425"/>
    <lineage>
        <taxon>Eukaryota</taxon>
        <taxon>Viridiplantae</taxon>
        <taxon>Streptophyta</taxon>
        <taxon>Embryophyta</taxon>
        <taxon>Tracheophyta</taxon>
        <taxon>Spermatophyta</taxon>
        <taxon>Magnoliopsida</taxon>
        <taxon>eudicotyledons</taxon>
        <taxon>Gunneridae</taxon>
        <taxon>Pentapetalae</taxon>
        <taxon>asterids</taxon>
        <taxon>lamiids</taxon>
        <taxon>Solanales</taxon>
        <taxon>Solanaceae</taxon>
        <taxon>Solanoideae</taxon>
        <taxon>Solaneae</taxon>
        <taxon>Solanum</taxon>
    </lineage>
</organism>
<gene>
    <name evidence="1" type="primary">psaI</name>
</gene>
<comment type="function">
    <text evidence="1">May help in the organization of the PsaL subunit.</text>
</comment>
<comment type="subcellular location">
    <subcellularLocation>
        <location evidence="1">Plastid</location>
        <location evidence="1">Chloroplast thylakoid membrane</location>
        <topology evidence="1">Single-pass membrane protein</topology>
    </subcellularLocation>
</comment>
<comment type="similarity">
    <text evidence="1">Belongs to the PsaI family.</text>
</comment>
<feature type="chain" id="PRO_0000276037" description="Photosystem I reaction center subunit VIII">
    <location>
        <begin position="1"/>
        <end position="36"/>
    </location>
</feature>
<feature type="transmembrane region" description="Helical" evidence="1">
    <location>
        <begin position="8"/>
        <end position="28"/>
    </location>
</feature>
<proteinExistence type="inferred from homology"/>